<keyword id="KW-0238">DNA-binding</keyword>
<keyword id="KW-0489">Methyltransferase</keyword>
<keyword id="KW-0496">Mitochondrion</keyword>
<keyword id="KW-1185">Reference proteome</keyword>
<keyword id="KW-0694">RNA-binding</keyword>
<keyword id="KW-0698">rRNA processing</keyword>
<keyword id="KW-0949">S-adenosyl-L-methionine</keyword>
<keyword id="KW-0804">Transcription</keyword>
<keyword id="KW-0805">Transcription regulation</keyword>
<keyword id="KW-0808">Transferase</keyword>
<keyword id="KW-0809">Transit peptide</keyword>
<name>TFB1M_XENLA</name>
<feature type="transit peptide" description="Mitochondrion" evidence="3">
    <location>
        <begin position="1"/>
        <end position="27"/>
    </location>
</feature>
<feature type="chain" id="PRO_0000273176" description="Dimethyladenosine transferase 1, mitochondrial">
    <location>
        <begin position="28"/>
        <end position="344"/>
    </location>
</feature>
<feature type="binding site" evidence="1">
    <location>
        <position position="36"/>
    </location>
    <ligand>
        <name>S-adenosyl-L-methionine</name>
        <dbReference type="ChEBI" id="CHEBI:59789"/>
    </ligand>
</feature>
<feature type="binding site" evidence="1">
    <location>
        <position position="38"/>
    </location>
    <ligand>
        <name>S-adenosyl-L-methionine</name>
        <dbReference type="ChEBI" id="CHEBI:59789"/>
    </ligand>
</feature>
<feature type="binding site" evidence="1">
    <location>
        <position position="63"/>
    </location>
    <ligand>
        <name>S-adenosyl-L-methionine</name>
        <dbReference type="ChEBI" id="CHEBI:59789"/>
    </ligand>
</feature>
<feature type="binding site" evidence="1">
    <location>
        <position position="85"/>
    </location>
    <ligand>
        <name>S-adenosyl-L-methionine</name>
        <dbReference type="ChEBI" id="CHEBI:59789"/>
    </ligand>
</feature>
<feature type="binding site" evidence="1">
    <location>
        <position position="86"/>
    </location>
    <ligand>
        <name>S-adenosyl-L-methionine</name>
        <dbReference type="ChEBI" id="CHEBI:59789"/>
    </ligand>
</feature>
<feature type="binding site" evidence="1">
    <location>
        <position position="111"/>
    </location>
    <ligand>
        <name>S-adenosyl-L-methionine</name>
        <dbReference type="ChEBI" id="CHEBI:59789"/>
    </ligand>
</feature>
<feature type="binding site" evidence="1">
    <location>
        <position position="112"/>
    </location>
    <ligand>
        <name>S-adenosyl-L-methionine</name>
        <dbReference type="ChEBI" id="CHEBI:59789"/>
    </ligand>
</feature>
<feature type="binding site" evidence="1">
    <location>
        <position position="141"/>
    </location>
    <ligand>
        <name>S-adenosyl-L-methionine</name>
        <dbReference type="ChEBI" id="CHEBI:59789"/>
    </ligand>
</feature>
<sequence>MATPGALAKFRLPPLPTIGEIVKLFNLRAEKQLSQNFLLDLKLTDKIVRRAGNLQNAYVCEVGPGPGGITRSILNAGVEELLVVEKDTRFIPGLKMLNEASGGKVRTVHGDILTYRMDRAFPKHLIKSWDDEPPNVHIIGNLPFSVSTPLIIKWLEQVADRTGPFTYGRTQMTLTFQQEVAERLTASTKNKQRSRLSIMSQYLCNVKNCFTIPGRAFIPKPKVDVGVVHLTPFVQPKIEQPFKLVEKVVRCIFQFRRKYCHHGVSILFPEEIRIQLTEQMLRLADVDPTLRPTELTMTHFKKLCNVYREMCDQNPHLFSYNYREELRMKKLQGKSTEEEDDLLQ</sequence>
<comment type="function">
    <text evidence="2">Mitochondrial methyltransferase which uses S-adenosyl methionine to dimethylate two highly conserved adjacent adenosine residues (A1583 and A1584) within the loop of helix 45 at the 3-prime end of 12S rRNA, thereby regulating the assembly or stability of the small subunit of the mitochondrial ribosome. Also required for basal transcription of mitochondrial DNA, probably via its interaction with POLRMT and TFAM. Stimulates transcription independently of the methyltransferase activity.</text>
</comment>
<comment type="catalytic activity">
    <reaction evidence="2">
        <text>adenosine(N)/adenosine(N+1) in rRNA + 4 S-adenosyl-L-methionine = N(6)-dimethyladenosine(N)/N(6)-dimethyladenosine(N+1) in rRNA + 4 S-adenosyl-L-homocysteine + 4 H(+)</text>
        <dbReference type="Rhea" id="RHEA:78527"/>
        <dbReference type="Rhea" id="RHEA-COMP:19105"/>
        <dbReference type="Rhea" id="RHEA-COMP:19106"/>
        <dbReference type="ChEBI" id="CHEBI:15378"/>
        <dbReference type="ChEBI" id="CHEBI:57856"/>
        <dbReference type="ChEBI" id="CHEBI:59789"/>
        <dbReference type="ChEBI" id="CHEBI:74411"/>
        <dbReference type="ChEBI" id="CHEBI:74493"/>
    </reaction>
</comment>
<comment type="subcellular location">
    <subcellularLocation>
        <location evidence="2">Mitochondrion</location>
    </subcellularLocation>
</comment>
<comment type="similarity">
    <text evidence="4">Belongs to the class I-like SAM-binding methyltransferase superfamily. rRNA adenine N(6)-methyltransferase family. KsgA subfamily.</text>
</comment>
<dbReference type="EC" id="2.1.1.-" evidence="2"/>
<dbReference type="EMBL" id="BC056010">
    <property type="protein sequence ID" value="AAH56010.1"/>
    <property type="molecule type" value="mRNA"/>
</dbReference>
<dbReference type="RefSeq" id="NP_001079850.1">
    <property type="nucleotide sequence ID" value="NM_001086381.1"/>
</dbReference>
<dbReference type="SMR" id="Q7T0W5"/>
<dbReference type="DNASU" id="379540"/>
<dbReference type="GeneID" id="379540"/>
<dbReference type="KEGG" id="xla:379540"/>
<dbReference type="AGR" id="Xenbase:XB-GENE-6255481"/>
<dbReference type="CTD" id="379540"/>
<dbReference type="Xenbase" id="XB-GENE-6255481">
    <property type="gene designation" value="tfb1m.L"/>
</dbReference>
<dbReference type="OrthoDB" id="16079at2759"/>
<dbReference type="Proteomes" id="UP000186698">
    <property type="component" value="Chromosome 9_10L"/>
</dbReference>
<dbReference type="Bgee" id="379540">
    <property type="expression patterns" value="Expressed in oocyte and 19 other cell types or tissues"/>
</dbReference>
<dbReference type="GO" id="GO:0005759">
    <property type="term" value="C:mitochondrial matrix"/>
    <property type="evidence" value="ECO:0000318"/>
    <property type="project" value="GO_Central"/>
</dbReference>
<dbReference type="GO" id="GO:0003677">
    <property type="term" value="F:DNA binding"/>
    <property type="evidence" value="ECO:0007669"/>
    <property type="project" value="UniProtKB-KW"/>
</dbReference>
<dbReference type="GO" id="GO:0034246">
    <property type="term" value="F:mitochondrial transcription factor activity"/>
    <property type="evidence" value="ECO:0000318"/>
    <property type="project" value="GO_Central"/>
</dbReference>
<dbReference type="GO" id="GO:0003723">
    <property type="term" value="F:RNA binding"/>
    <property type="evidence" value="ECO:0007669"/>
    <property type="project" value="UniProtKB-KW"/>
</dbReference>
<dbReference type="GO" id="GO:0000179">
    <property type="term" value="F:rRNA (adenine-N6,N6-)-dimethyltransferase activity"/>
    <property type="evidence" value="ECO:0000250"/>
    <property type="project" value="UniProtKB"/>
</dbReference>
<dbReference type="GO" id="GO:1904047">
    <property type="term" value="F:S-adenosyl-L-methionine binding"/>
    <property type="evidence" value="ECO:0000250"/>
    <property type="project" value="UniProtKB"/>
</dbReference>
<dbReference type="GO" id="GO:0031167">
    <property type="term" value="P:rRNA methylation"/>
    <property type="evidence" value="ECO:0000250"/>
    <property type="project" value="UniProtKB"/>
</dbReference>
<dbReference type="GO" id="GO:0006391">
    <property type="term" value="P:transcription initiation at mitochondrial promoter"/>
    <property type="evidence" value="ECO:0000318"/>
    <property type="project" value="GO_Central"/>
</dbReference>
<dbReference type="CDD" id="cd02440">
    <property type="entry name" value="AdoMet_MTases"/>
    <property type="match status" value="1"/>
</dbReference>
<dbReference type="FunFam" id="1.10.8.100:FF:000004">
    <property type="entry name" value="rRNA adenine N(6)-methyltransferase"/>
    <property type="match status" value="1"/>
</dbReference>
<dbReference type="FunFam" id="3.40.50.150:FF:000109">
    <property type="entry name" value="rRNA adenine N(6)-methyltransferase"/>
    <property type="match status" value="1"/>
</dbReference>
<dbReference type="Gene3D" id="1.10.8.100">
    <property type="entry name" value="Ribosomal RNA adenine dimethylase-like, domain 2"/>
    <property type="match status" value="1"/>
</dbReference>
<dbReference type="Gene3D" id="3.40.50.150">
    <property type="entry name" value="Vaccinia Virus protein VP39"/>
    <property type="match status" value="1"/>
</dbReference>
<dbReference type="InterPro" id="IPR001737">
    <property type="entry name" value="KsgA/Erm"/>
</dbReference>
<dbReference type="InterPro" id="IPR023165">
    <property type="entry name" value="rRNA_Ade_diMease-like_C"/>
</dbReference>
<dbReference type="InterPro" id="IPR020598">
    <property type="entry name" value="rRNA_Ade_methylase_Trfase_N"/>
</dbReference>
<dbReference type="InterPro" id="IPR011530">
    <property type="entry name" value="rRNA_adenine_dimethylase"/>
</dbReference>
<dbReference type="InterPro" id="IPR029063">
    <property type="entry name" value="SAM-dependent_MTases_sf"/>
</dbReference>
<dbReference type="NCBIfam" id="TIGR00755">
    <property type="entry name" value="ksgA"/>
    <property type="match status" value="1"/>
</dbReference>
<dbReference type="PANTHER" id="PTHR11727">
    <property type="entry name" value="DIMETHYLADENOSINE TRANSFERASE"/>
    <property type="match status" value="1"/>
</dbReference>
<dbReference type="PANTHER" id="PTHR11727:SF17">
    <property type="entry name" value="DIMETHYLADENOSINE TRANSFERASE 1, MITOCHONDRIAL"/>
    <property type="match status" value="1"/>
</dbReference>
<dbReference type="Pfam" id="PF00398">
    <property type="entry name" value="RrnaAD"/>
    <property type="match status" value="1"/>
</dbReference>
<dbReference type="PIRSF" id="PIRSF027833">
    <property type="entry name" value="MtTFB2"/>
    <property type="match status" value="1"/>
</dbReference>
<dbReference type="SMART" id="SM00650">
    <property type="entry name" value="rADc"/>
    <property type="match status" value="1"/>
</dbReference>
<dbReference type="SUPFAM" id="SSF53335">
    <property type="entry name" value="S-adenosyl-L-methionine-dependent methyltransferases"/>
    <property type="match status" value="1"/>
</dbReference>
<dbReference type="PROSITE" id="PS51689">
    <property type="entry name" value="SAM_RNA_A_N6_MT"/>
    <property type="match status" value="1"/>
</dbReference>
<evidence type="ECO:0000250" key="1">
    <source>
        <dbReference type="UniProtKB" id="Q8JZM0"/>
    </source>
</evidence>
<evidence type="ECO:0000250" key="2">
    <source>
        <dbReference type="UniProtKB" id="Q8WVM0"/>
    </source>
</evidence>
<evidence type="ECO:0000255" key="3"/>
<evidence type="ECO:0000255" key="4">
    <source>
        <dbReference type="PROSITE-ProRule" id="PRU01026"/>
    </source>
</evidence>
<organism>
    <name type="scientific">Xenopus laevis</name>
    <name type="common">African clawed frog</name>
    <dbReference type="NCBI Taxonomy" id="8355"/>
    <lineage>
        <taxon>Eukaryota</taxon>
        <taxon>Metazoa</taxon>
        <taxon>Chordata</taxon>
        <taxon>Craniata</taxon>
        <taxon>Vertebrata</taxon>
        <taxon>Euteleostomi</taxon>
        <taxon>Amphibia</taxon>
        <taxon>Batrachia</taxon>
        <taxon>Anura</taxon>
        <taxon>Pipoidea</taxon>
        <taxon>Pipidae</taxon>
        <taxon>Xenopodinae</taxon>
        <taxon>Xenopus</taxon>
        <taxon>Xenopus</taxon>
    </lineage>
</organism>
<protein>
    <recommendedName>
        <fullName>Dimethyladenosine transferase 1, mitochondrial</fullName>
        <ecNumber evidence="2">2.1.1.-</ecNumber>
    </recommendedName>
    <alternativeName>
        <fullName>Mitochondrial 12S rRNA dimethylase 1</fullName>
    </alternativeName>
    <alternativeName>
        <fullName>Mitochondrial transcription factor B1</fullName>
        <shortName>mtTFB1</shortName>
    </alternativeName>
    <alternativeName>
        <fullName>S-adenosylmethionine-6-N', N'-adenosyl(rRNA) dimethyltransferase 1</fullName>
    </alternativeName>
</protein>
<proteinExistence type="evidence at transcript level"/>
<reference key="1">
    <citation type="submission" date="2003-08" db="EMBL/GenBank/DDBJ databases">
        <authorList>
            <consortium name="NIH - Xenopus Gene Collection (XGC) project"/>
        </authorList>
    </citation>
    <scope>NUCLEOTIDE SEQUENCE [LARGE SCALE MRNA]</scope>
    <source>
        <tissue>Embryo</tissue>
    </source>
</reference>
<gene>
    <name type="primary">tfb1m.L</name>
</gene>
<accession>Q7T0W5</accession>